<gene>
    <name evidence="1" type="primary">thiE</name>
    <name type="ordered locus">tlr1947</name>
</gene>
<keyword id="KW-0460">Magnesium</keyword>
<keyword id="KW-0479">Metal-binding</keyword>
<keyword id="KW-1185">Reference proteome</keyword>
<keyword id="KW-0784">Thiamine biosynthesis</keyword>
<keyword id="KW-0808">Transferase</keyword>
<dbReference type="EC" id="2.5.1.3" evidence="1"/>
<dbReference type="EMBL" id="BA000039">
    <property type="protein sequence ID" value="BAC09499.1"/>
    <property type="status" value="ALT_INIT"/>
    <property type="molecule type" value="Genomic_DNA"/>
</dbReference>
<dbReference type="RefSeq" id="NP_682737.1">
    <property type="nucleotide sequence ID" value="NC_004113.1"/>
</dbReference>
<dbReference type="RefSeq" id="WP_164920956.1">
    <property type="nucleotide sequence ID" value="NC_004113.1"/>
</dbReference>
<dbReference type="SMR" id="Q8DHK2"/>
<dbReference type="STRING" id="197221.gene:10748554"/>
<dbReference type="EnsemblBacteria" id="BAC09499">
    <property type="protein sequence ID" value="BAC09499"/>
    <property type="gene ID" value="BAC09499"/>
</dbReference>
<dbReference type="KEGG" id="tel:tlr1947"/>
<dbReference type="PATRIC" id="fig|197221.4.peg.2037"/>
<dbReference type="eggNOG" id="COG0352">
    <property type="taxonomic scope" value="Bacteria"/>
</dbReference>
<dbReference type="UniPathway" id="UPA00060">
    <property type="reaction ID" value="UER00141"/>
</dbReference>
<dbReference type="Proteomes" id="UP000000440">
    <property type="component" value="Chromosome"/>
</dbReference>
<dbReference type="GO" id="GO:0005737">
    <property type="term" value="C:cytoplasm"/>
    <property type="evidence" value="ECO:0007669"/>
    <property type="project" value="TreeGrafter"/>
</dbReference>
<dbReference type="GO" id="GO:0000287">
    <property type="term" value="F:magnesium ion binding"/>
    <property type="evidence" value="ECO:0007669"/>
    <property type="project" value="UniProtKB-UniRule"/>
</dbReference>
<dbReference type="GO" id="GO:0004789">
    <property type="term" value="F:thiamine-phosphate diphosphorylase activity"/>
    <property type="evidence" value="ECO:0007669"/>
    <property type="project" value="UniProtKB-UniRule"/>
</dbReference>
<dbReference type="GO" id="GO:0009228">
    <property type="term" value="P:thiamine biosynthetic process"/>
    <property type="evidence" value="ECO:0007669"/>
    <property type="project" value="UniProtKB-KW"/>
</dbReference>
<dbReference type="GO" id="GO:0009229">
    <property type="term" value="P:thiamine diphosphate biosynthetic process"/>
    <property type="evidence" value="ECO:0007669"/>
    <property type="project" value="UniProtKB-UniRule"/>
</dbReference>
<dbReference type="CDD" id="cd00564">
    <property type="entry name" value="TMP_TenI"/>
    <property type="match status" value="1"/>
</dbReference>
<dbReference type="FunFam" id="3.20.20.70:FF:000096">
    <property type="entry name" value="Thiamine-phosphate synthase"/>
    <property type="match status" value="1"/>
</dbReference>
<dbReference type="Gene3D" id="3.20.20.70">
    <property type="entry name" value="Aldolase class I"/>
    <property type="match status" value="1"/>
</dbReference>
<dbReference type="HAMAP" id="MF_00097">
    <property type="entry name" value="TMP_synthase"/>
    <property type="match status" value="1"/>
</dbReference>
<dbReference type="HAMAP" id="MF_01327">
    <property type="entry name" value="TMP_synthase_cyanobact"/>
    <property type="match status" value="1"/>
</dbReference>
<dbReference type="InterPro" id="IPR013785">
    <property type="entry name" value="Aldolase_TIM"/>
</dbReference>
<dbReference type="InterPro" id="IPR036206">
    <property type="entry name" value="ThiamineP_synth_sf"/>
</dbReference>
<dbReference type="InterPro" id="IPR022998">
    <property type="entry name" value="ThiamineP_synth_TenI"/>
</dbReference>
<dbReference type="InterPro" id="IPR041397">
    <property type="entry name" value="ThiD2"/>
</dbReference>
<dbReference type="InterPro" id="IPR034291">
    <property type="entry name" value="TMP_synthase"/>
</dbReference>
<dbReference type="InterPro" id="IPR016229">
    <property type="entry name" value="TMP_synthase_cyanobac_bac"/>
</dbReference>
<dbReference type="NCBIfam" id="NF002727">
    <property type="entry name" value="PRK02615.1"/>
    <property type="match status" value="1"/>
</dbReference>
<dbReference type="NCBIfam" id="TIGR00693">
    <property type="entry name" value="thiE"/>
    <property type="match status" value="1"/>
</dbReference>
<dbReference type="PANTHER" id="PTHR20857">
    <property type="entry name" value="THIAMINE-PHOSPHATE PYROPHOSPHORYLASE"/>
    <property type="match status" value="1"/>
</dbReference>
<dbReference type="PANTHER" id="PTHR20857:SF15">
    <property type="entry name" value="THIAMINE-PHOSPHATE SYNTHASE"/>
    <property type="match status" value="1"/>
</dbReference>
<dbReference type="Pfam" id="PF17792">
    <property type="entry name" value="ThiD2"/>
    <property type="match status" value="1"/>
</dbReference>
<dbReference type="Pfam" id="PF02581">
    <property type="entry name" value="TMP-TENI"/>
    <property type="match status" value="1"/>
</dbReference>
<dbReference type="PIRSF" id="PIRSF000512">
    <property type="entry name" value="TMP_PPase_Cyanobac_prd"/>
    <property type="match status" value="1"/>
</dbReference>
<dbReference type="SUPFAM" id="SSF51391">
    <property type="entry name" value="Thiamin phosphate synthase"/>
    <property type="match status" value="1"/>
</dbReference>
<evidence type="ECO:0000255" key="1">
    <source>
        <dbReference type="HAMAP-Rule" id="MF_01327"/>
    </source>
</evidence>
<evidence type="ECO:0000256" key="2">
    <source>
        <dbReference type="SAM" id="MobiDB-lite"/>
    </source>
</evidence>
<evidence type="ECO:0000305" key="3"/>
<proteinExistence type="inferred from homology"/>
<name>THIE_THEVB</name>
<accession>Q8DHK2</accession>
<feature type="chain" id="PRO_0000157084" description="Thiamine-phosphate synthase">
    <location>
        <begin position="1"/>
        <end position="351"/>
    </location>
</feature>
<feature type="region of interest" description="Unknown">
    <location>
        <begin position="1"/>
        <end position="127"/>
    </location>
</feature>
<feature type="region of interest" description="Disordered" evidence="2">
    <location>
        <begin position="64"/>
        <end position="84"/>
    </location>
</feature>
<feature type="region of interest" description="Thiamine-phosphate synthase">
    <location>
        <begin position="128"/>
        <end position="351"/>
    </location>
</feature>
<feature type="binding site" evidence="1">
    <location>
        <begin position="178"/>
        <end position="182"/>
    </location>
    <ligand>
        <name>4-amino-2-methyl-5-(diphosphooxymethyl)pyrimidine</name>
        <dbReference type="ChEBI" id="CHEBI:57841"/>
    </ligand>
</feature>
<feature type="binding site" evidence="1">
    <location>
        <position position="210"/>
    </location>
    <ligand>
        <name>4-amino-2-methyl-5-(diphosphooxymethyl)pyrimidine</name>
        <dbReference type="ChEBI" id="CHEBI:57841"/>
    </ligand>
</feature>
<feature type="binding site" evidence="1">
    <location>
        <position position="211"/>
    </location>
    <ligand>
        <name>Mg(2+)</name>
        <dbReference type="ChEBI" id="CHEBI:18420"/>
    </ligand>
</feature>
<feature type="binding site" evidence="1">
    <location>
        <position position="230"/>
    </location>
    <ligand>
        <name>Mg(2+)</name>
        <dbReference type="ChEBI" id="CHEBI:18420"/>
    </ligand>
</feature>
<feature type="binding site" evidence="1">
    <location>
        <position position="249"/>
    </location>
    <ligand>
        <name>4-amino-2-methyl-5-(diphosphooxymethyl)pyrimidine</name>
        <dbReference type="ChEBI" id="CHEBI:57841"/>
    </ligand>
</feature>
<feature type="binding site" evidence="1">
    <location>
        <begin position="275"/>
        <end position="277"/>
    </location>
    <ligand>
        <name>2-[(2R,5Z)-2-carboxy-4-methylthiazol-5(2H)-ylidene]ethyl phosphate</name>
        <dbReference type="ChEBI" id="CHEBI:62899"/>
    </ligand>
</feature>
<feature type="binding site" evidence="1">
    <location>
        <position position="278"/>
    </location>
    <ligand>
        <name>4-amino-2-methyl-5-(diphosphooxymethyl)pyrimidine</name>
        <dbReference type="ChEBI" id="CHEBI:57841"/>
    </ligand>
</feature>
<feature type="binding site" evidence="1">
    <location>
        <position position="305"/>
    </location>
    <ligand>
        <name>2-[(2R,5Z)-2-carboxy-4-methylthiazol-5(2H)-ylidene]ethyl phosphate</name>
        <dbReference type="ChEBI" id="CHEBI:62899"/>
    </ligand>
</feature>
<sequence length="351" mass="38829">MQNLAPASEGQRLRRILDANLDRAREGLRVIEEWCRFGREDAALSAECKDLRQTLGRYHTEELRAARQTDQDPGTALSHPQERDRPTLNAVLTANFARVQEALRVIEEYGKLTDTELSETAKALRYRVYILEQALTLNPLQARLRQLQGAKLYLVTAPSDRLLEIVEAALKGGLPLVQYRDKTSDDHTRLTTARQLQALCQRYGALFLVNDRVDIALGANADGVHLGQMDIPMELARQILGRDRLVGRSTTNAQELERAIAEGADYVGVGPIFATPTKPGKAAVGFDYLQYARKHAPMPQFAIGGIDLSNIEEVIKAGATQVAVVRAIMAAADPEATTRELLRRLSQGEPS</sequence>
<comment type="function">
    <text evidence="1">Condenses 4-methyl-5-(beta-hydroxyethyl)thiazole monophosphate (THZ-P) and 2-methyl-4-amino-5-hydroxymethyl pyrimidine pyrophosphate (HMP-PP) to form thiamine monophosphate (TMP).</text>
</comment>
<comment type="catalytic activity">
    <reaction evidence="1">
        <text>2-[(2R,5Z)-2-carboxy-4-methylthiazol-5(2H)-ylidene]ethyl phosphate + 4-amino-2-methyl-5-(diphosphooxymethyl)pyrimidine + 2 H(+) = thiamine phosphate + CO2 + diphosphate</text>
        <dbReference type="Rhea" id="RHEA:47844"/>
        <dbReference type="ChEBI" id="CHEBI:15378"/>
        <dbReference type="ChEBI" id="CHEBI:16526"/>
        <dbReference type="ChEBI" id="CHEBI:33019"/>
        <dbReference type="ChEBI" id="CHEBI:37575"/>
        <dbReference type="ChEBI" id="CHEBI:57841"/>
        <dbReference type="ChEBI" id="CHEBI:62899"/>
        <dbReference type="EC" id="2.5.1.3"/>
    </reaction>
</comment>
<comment type="catalytic activity">
    <reaction evidence="1">
        <text>2-(2-carboxy-4-methylthiazol-5-yl)ethyl phosphate + 4-amino-2-methyl-5-(diphosphooxymethyl)pyrimidine + 2 H(+) = thiamine phosphate + CO2 + diphosphate</text>
        <dbReference type="Rhea" id="RHEA:47848"/>
        <dbReference type="ChEBI" id="CHEBI:15378"/>
        <dbReference type="ChEBI" id="CHEBI:16526"/>
        <dbReference type="ChEBI" id="CHEBI:33019"/>
        <dbReference type="ChEBI" id="CHEBI:37575"/>
        <dbReference type="ChEBI" id="CHEBI:57841"/>
        <dbReference type="ChEBI" id="CHEBI:62890"/>
        <dbReference type="EC" id="2.5.1.3"/>
    </reaction>
</comment>
<comment type="catalytic activity">
    <reaction evidence="1">
        <text>4-methyl-5-(2-phosphooxyethyl)-thiazole + 4-amino-2-methyl-5-(diphosphooxymethyl)pyrimidine + H(+) = thiamine phosphate + diphosphate</text>
        <dbReference type="Rhea" id="RHEA:22328"/>
        <dbReference type="ChEBI" id="CHEBI:15378"/>
        <dbReference type="ChEBI" id="CHEBI:33019"/>
        <dbReference type="ChEBI" id="CHEBI:37575"/>
        <dbReference type="ChEBI" id="CHEBI:57841"/>
        <dbReference type="ChEBI" id="CHEBI:58296"/>
        <dbReference type="EC" id="2.5.1.3"/>
    </reaction>
</comment>
<comment type="cofactor">
    <cofactor evidence="1">
        <name>Mg(2+)</name>
        <dbReference type="ChEBI" id="CHEBI:18420"/>
    </cofactor>
    <text evidence="1">Binds 1 Mg(2+) ion per subunit.</text>
</comment>
<comment type="pathway">
    <text evidence="1">Cofactor biosynthesis; thiamine diphosphate biosynthesis; thiamine phosphate from 4-amino-2-methyl-5-diphosphomethylpyrimidine and 4-methyl-5-(2-phosphoethyl)-thiazole: step 1/1.</text>
</comment>
<comment type="similarity">
    <text evidence="1">Belongs to the thiamine-phosphate synthase family.</text>
</comment>
<comment type="sequence caution" evidence="3">
    <conflict type="erroneous initiation">
        <sequence resource="EMBL-CDS" id="BAC09499"/>
    </conflict>
</comment>
<protein>
    <recommendedName>
        <fullName evidence="1">Thiamine-phosphate synthase</fullName>
        <shortName evidence="1">TP synthase</shortName>
        <shortName evidence="1">TPS</shortName>
        <ecNumber evidence="1">2.5.1.3</ecNumber>
    </recommendedName>
    <alternativeName>
        <fullName evidence="1">Thiamine-phosphate pyrophosphorylase</fullName>
        <shortName evidence="1">TMP pyrophosphorylase</shortName>
        <shortName evidence="1">TMP-PPase</shortName>
    </alternativeName>
</protein>
<reference key="1">
    <citation type="journal article" date="2002" name="DNA Res.">
        <title>Complete genome structure of the thermophilic cyanobacterium Thermosynechococcus elongatus BP-1.</title>
        <authorList>
            <person name="Nakamura Y."/>
            <person name="Kaneko T."/>
            <person name="Sato S."/>
            <person name="Ikeuchi M."/>
            <person name="Katoh H."/>
            <person name="Sasamoto S."/>
            <person name="Watanabe A."/>
            <person name="Iriguchi M."/>
            <person name="Kawashima K."/>
            <person name="Kimura T."/>
            <person name="Kishida Y."/>
            <person name="Kiyokawa C."/>
            <person name="Kohara M."/>
            <person name="Matsumoto M."/>
            <person name="Matsuno A."/>
            <person name="Nakazaki N."/>
            <person name="Shimpo S."/>
            <person name="Sugimoto M."/>
            <person name="Takeuchi C."/>
            <person name="Yamada M."/>
            <person name="Tabata S."/>
        </authorList>
    </citation>
    <scope>NUCLEOTIDE SEQUENCE [LARGE SCALE GENOMIC DNA]</scope>
    <source>
        <strain>NIES-2133 / IAM M-273 / BP-1</strain>
    </source>
</reference>
<organism>
    <name type="scientific">Thermosynechococcus vestitus (strain NIES-2133 / IAM M-273 / BP-1)</name>
    <dbReference type="NCBI Taxonomy" id="197221"/>
    <lineage>
        <taxon>Bacteria</taxon>
        <taxon>Bacillati</taxon>
        <taxon>Cyanobacteriota</taxon>
        <taxon>Cyanophyceae</taxon>
        <taxon>Acaryochloridales</taxon>
        <taxon>Thermosynechococcaceae</taxon>
        <taxon>Thermosynechococcus</taxon>
    </lineage>
</organism>